<keyword id="KW-0328">Glycosyltransferase</keyword>
<keyword id="KW-0597">Phosphoprotein</keyword>
<keyword id="KW-1185">Reference proteome</keyword>
<keyword id="KW-0808">Transferase</keyword>
<reference key="1">
    <citation type="journal article" date="1998" name="Nature">
        <title>Analysis of 1.9 Mb of contiguous sequence from chromosome 4 of Arabidopsis thaliana.</title>
        <authorList>
            <person name="Bevan M."/>
            <person name="Bancroft I."/>
            <person name="Bent E."/>
            <person name="Love K."/>
            <person name="Goodman H.M."/>
            <person name="Dean C."/>
            <person name="Bergkamp R."/>
            <person name="Dirkse W."/>
            <person name="van Staveren M."/>
            <person name="Stiekema W."/>
            <person name="Drost L."/>
            <person name="Ridley P."/>
            <person name="Hudson S.-A."/>
            <person name="Patel K."/>
            <person name="Murphy G."/>
            <person name="Piffanelli P."/>
            <person name="Wedler H."/>
            <person name="Wedler E."/>
            <person name="Wambutt R."/>
            <person name="Weitzenegger T."/>
            <person name="Pohl T."/>
            <person name="Terryn N."/>
            <person name="Gielen J."/>
            <person name="Villarroel R."/>
            <person name="De Clercq R."/>
            <person name="van Montagu M."/>
            <person name="Lecharny A."/>
            <person name="Aubourg S."/>
            <person name="Gy I."/>
            <person name="Kreis M."/>
            <person name="Lao N."/>
            <person name="Kavanagh T."/>
            <person name="Hempel S."/>
            <person name="Kotter P."/>
            <person name="Entian K.-D."/>
            <person name="Rieger M."/>
            <person name="Schaefer M."/>
            <person name="Funk B."/>
            <person name="Mueller-Auer S."/>
            <person name="Silvey M."/>
            <person name="James R."/>
            <person name="Monfort A."/>
            <person name="Pons A."/>
            <person name="Puigdomenech P."/>
            <person name="Douka A."/>
            <person name="Voukelatou E."/>
            <person name="Milioni D."/>
            <person name="Hatzopoulos P."/>
            <person name="Piravandi E."/>
            <person name="Obermaier B."/>
            <person name="Hilbert H."/>
            <person name="Duesterhoeft A."/>
            <person name="Moores T."/>
            <person name="Jones J.D.G."/>
            <person name="Eneva T."/>
            <person name="Palme K."/>
            <person name="Benes V."/>
            <person name="Rechmann S."/>
            <person name="Ansorge W."/>
            <person name="Cooke R."/>
            <person name="Berger C."/>
            <person name="Delseny M."/>
            <person name="Voet M."/>
            <person name="Volckaert G."/>
            <person name="Mewes H.-W."/>
            <person name="Klosterman S."/>
            <person name="Schueller C."/>
            <person name="Chalwatzis N."/>
        </authorList>
    </citation>
    <scope>NUCLEOTIDE SEQUENCE [LARGE SCALE GENOMIC DNA]</scope>
    <source>
        <strain>cv. Columbia</strain>
    </source>
</reference>
<reference key="2">
    <citation type="journal article" date="1999" name="Nature">
        <title>Sequence and analysis of chromosome 4 of the plant Arabidopsis thaliana.</title>
        <authorList>
            <person name="Mayer K.F.X."/>
            <person name="Schueller C."/>
            <person name="Wambutt R."/>
            <person name="Murphy G."/>
            <person name="Volckaert G."/>
            <person name="Pohl T."/>
            <person name="Duesterhoeft A."/>
            <person name="Stiekema W."/>
            <person name="Entian K.-D."/>
            <person name="Terryn N."/>
            <person name="Harris B."/>
            <person name="Ansorge W."/>
            <person name="Brandt P."/>
            <person name="Grivell L.A."/>
            <person name="Rieger M."/>
            <person name="Weichselgartner M."/>
            <person name="de Simone V."/>
            <person name="Obermaier B."/>
            <person name="Mache R."/>
            <person name="Mueller M."/>
            <person name="Kreis M."/>
            <person name="Delseny M."/>
            <person name="Puigdomenech P."/>
            <person name="Watson M."/>
            <person name="Schmidtheini T."/>
            <person name="Reichert B."/>
            <person name="Portetelle D."/>
            <person name="Perez-Alonso M."/>
            <person name="Boutry M."/>
            <person name="Bancroft I."/>
            <person name="Vos P."/>
            <person name="Hoheisel J."/>
            <person name="Zimmermann W."/>
            <person name="Wedler H."/>
            <person name="Ridley P."/>
            <person name="Langham S.-A."/>
            <person name="McCullagh B."/>
            <person name="Bilham L."/>
            <person name="Robben J."/>
            <person name="van der Schueren J."/>
            <person name="Grymonprez B."/>
            <person name="Chuang Y.-J."/>
            <person name="Vandenbussche F."/>
            <person name="Braeken M."/>
            <person name="Weltjens I."/>
            <person name="Voet M."/>
            <person name="Bastiaens I."/>
            <person name="Aert R."/>
            <person name="Defoor E."/>
            <person name="Weitzenegger T."/>
            <person name="Bothe G."/>
            <person name="Ramsperger U."/>
            <person name="Hilbert H."/>
            <person name="Braun M."/>
            <person name="Holzer E."/>
            <person name="Brandt A."/>
            <person name="Peters S."/>
            <person name="van Staveren M."/>
            <person name="Dirkse W."/>
            <person name="Mooijman P."/>
            <person name="Klein Lankhorst R."/>
            <person name="Rose M."/>
            <person name="Hauf J."/>
            <person name="Koetter P."/>
            <person name="Berneiser S."/>
            <person name="Hempel S."/>
            <person name="Feldpausch M."/>
            <person name="Lamberth S."/>
            <person name="Van den Daele H."/>
            <person name="De Keyser A."/>
            <person name="Buysshaert C."/>
            <person name="Gielen J."/>
            <person name="Villarroel R."/>
            <person name="De Clercq R."/>
            <person name="van Montagu M."/>
            <person name="Rogers J."/>
            <person name="Cronin A."/>
            <person name="Quail M.A."/>
            <person name="Bray-Allen S."/>
            <person name="Clark L."/>
            <person name="Doggett J."/>
            <person name="Hall S."/>
            <person name="Kay M."/>
            <person name="Lennard N."/>
            <person name="McLay K."/>
            <person name="Mayes R."/>
            <person name="Pettett A."/>
            <person name="Rajandream M.A."/>
            <person name="Lyne M."/>
            <person name="Benes V."/>
            <person name="Rechmann S."/>
            <person name="Borkova D."/>
            <person name="Bloecker H."/>
            <person name="Scharfe M."/>
            <person name="Grimm M."/>
            <person name="Loehnert T.-H."/>
            <person name="Dose S."/>
            <person name="de Haan M."/>
            <person name="Maarse A.C."/>
            <person name="Schaefer M."/>
            <person name="Mueller-Auer S."/>
            <person name="Gabel C."/>
            <person name="Fuchs M."/>
            <person name="Fartmann B."/>
            <person name="Granderath K."/>
            <person name="Dauner D."/>
            <person name="Herzl A."/>
            <person name="Neumann S."/>
            <person name="Argiriou A."/>
            <person name="Vitale D."/>
            <person name="Liguori R."/>
            <person name="Piravandi E."/>
            <person name="Massenet O."/>
            <person name="Quigley F."/>
            <person name="Clabauld G."/>
            <person name="Muendlein A."/>
            <person name="Felber R."/>
            <person name="Schnabl S."/>
            <person name="Hiller R."/>
            <person name="Schmidt W."/>
            <person name="Lecharny A."/>
            <person name="Aubourg S."/>
            <person name="Chefdor F."/>
            <person name="Cooke R."/>
            <person name="Berger C."/>
            <person name="Monfort A."/>
            <person name="Casacuberta E."/>
            <person name="Gibbons T."/>
            <person name="Weber N."/>
            <person name="Vandenbol M."/>
            <person name="Bargues M."/>
            <person name="Terol J."/>
            <person name="Torres A."/>
            <person name="Perez-Perez A."/>
            <person name="Purnelle B."/>
            <person name="Bent E."/>
            <person name="Johnson S."/>
            <person name="Tacon D."/>
            <person name="Jesse T."/>
            <person name="Heijnen L."/>
            <person name="Schwarz S."/>
            <person name="Scholler P."/>
            <person name="Heber S."/>
            <person name="Francs P."/>
            <person name="Bielke C."/>
            <person name="Frishman D."/>
            <person name="Haase D."/>
            <person name="Lemcke K."/>
            <person name="Mewes H.-W."/>
            <person name="Stocker S."/>
            <person name="Zaccaria P."/>
            <person name="Bevan M."/>
            <person name="Wilson R.K."/>
            <person name="de la Bastide M."/>
            <person name="Habermann K."/>
            <person name="Parnell L."/>
            <person name="Dedhia N."/>
            <person name="Gnoj L."/>
            <person name="Schutz K."/>
            <person name="Huang E."/>
            <person name="Spiegel L."/>
            <person name="Sekhon M."/>
            <person name="Murray J."/>
            <person name="Sheet P."/>
            <person name="Cordes M."/>
            <person name="Abu-Threideh J."/>
            <person name="Stoneking T."/>
            <person name="Kalicki J."/>
            <person name="Graves T."/>
            <person name="Harmon G."/>
            <person name="Edwards J."/>
            <person name="Latreille P."/>
            <person name="Courtney L."/>
            <person name="Cloud J."/>
            <person name="Abbott A."/>
            <person name="Scott K."/>
            <person name="Johnson D."/>
            <person name="Minx P."/>
            <person name="Bentley D."/>
            <person name="Fulton B."/>
            <person name="Miller N."/>
            <person name="Greco T."/>
            <person name="Kemp K."/>
            <person name="Kramer J."/>
            <person name="Fulton L."/>
            <person name="Mardis E."/>
            <person name="Dante M."/>
            <person name="Pepin K."/>
            <person name="Hillier L.W."/>
            <person name="Nelson J."/>
            <person name="Spieth J."/>
            <person name="Ryan E."/>
            <person name="Andrews S."/>
            <person name="Geisel C."/>
            <person name="Layman D."/>
            <person name="Du H."/>
            <person name="Ali J."/>
            <person name="Berghoff A."/>
            <person name="Jones K."/>
            <person name="Drone K."/>
            <person name="Cotton M."/>
            <person name="Joshu C."/>
            <person name="Antonoiu B."/>
            <person name="Zidanic M."/>
            <person name="Strong C."/>
            <person name="Sun H."/>
            <person name="Lamar B."/>
            <person name="Yordan C."/>
            <person name="Ma P."/>
            <person name="Zhong J."/>
            <person name="Preston R."/>
            <person name="Vil D."/>
            <person name="Shekher M."/>
            <person name="Matero A."/>
            <person name="Shah R."/>
            <person name="Swaby I.K."/>
            <person name="O'Shaughnessy A."/>
            <person name="Rodriguez M."/>
            <person name="Hoffman J."/>
            <person name="Till S."/>
            <person name="Granat S."/>
            <person name="Shohdy N."/>
            <person name="Hasegawa A."/>
            <person name="Hameed A."/>
            <person name="Lodhi M."/>
            <person name="Johnson A."/>
            <person name="Chen E."/>
            <person name="Marra M.A."/>
            <person name="Martienssen R."/>
            <person name="McCombie W.R."/>
        </authorList>
    </citation>
    <scope>NUCLEOTIDE SEQUENCE [LARGE SCALE GENOMIC DNA]</scope>
    <source>
        <strain>cv. Columbia</strain>
    </source>
</reference>
<reference key="3">
    <citation type="journal article" date="2017" name="Plant J.">
        <title>Araport11: a complete reannotation of the Arabidopsis thaliana reference genome.</title>
        <authorList>
            <person name="Cheng C.Y."/>
            <person name="Krishnakumar V."/>
            <person name="Chan A.P."/>
            <person name="Thibaud-Nissen F."/>
            <person name="Schobel S."/>
            <person name="Town C.D."/>
        </authorList>
    </citation>
    <scope>GENOME REANNOTATION</scope>
    <source>
        <strain>cv. Columbia</strain>
    </source>
</reference>
<reference key="4">
    <citation type="journal article" date="2003" name="Science">
        <title>Empirical analysis of transcriptional activity in the Arabidopsis genome.</title>
        <authorList>
            <person name="Yamada K."/>
            <person name="Lim J."/>
            <person name="Dale J.M."/>
            <person name="Chen H."/>
            <person name="Shinn P."/>
            <person name="Palm C.J."/>
            <person name="Southwick A.M."/>
            <person name="Wu H.C."/>
            <person name="Kim C.J."/>
            <person name="Nguyen M."/>
            <person name="Pham P.K."/>
            <person name="Cheuk R.F."/>
            <person name="Karlin-Newmann G."/>
            <person name="Liu S.X."/>
            <person name="Lam B."/>
            <person name="Sakano H."/>
            <person name="Wu T."/>
            <person name="Yu G."/>
            <person name="Miranda M."/>
            <person name="Quach H.L."/>
            <person name="Tripp M."/>
            <person name="Chang C.H."/>
            <person name="Lee J.M."/>
            <person name="Toriumi M.J."/>
            <person name="Chan M.M."/>
            <person name="Tang C.C."/>
            <person name="Onodera C.S."/>
            <person name="Deng J.M."/>
            <person name="Akiyama K."/>
            <person name="Ansari Y."/>
            <person name="Arakawa T."/>
            <person name="Banh J."/>
            <person name="Banno F."/>
            <person name="Bowser L."/>
            <person name="Brooks S.Y."/>
            <person name="Carninci P."/>
            <person name="Chao Q."/>
            <person name="Choy N."/>
            <person name="Enju A."/>
            <person name="Goldsmith A.D."/>
            <person name="Gurjal M."/>
            <person name="Hansen N.F."/>
            <person name="Hayashizaki Y."/>
            <person name="Johnson-Hopson C."/>
            <person name="Hsuan V.W."/>
            <person name="Iida K."/>
            <person name="Karnes M."/>
            <person name="Khan S."/>
            <person name="Koesema E."/>
            <person name="Ishida J."/>
            <person name="Jiang P.X."/>
            <person name="Jones T."/>
            <person name="Kawai J."/>
            <person name="Kamiya A."/>
            <person name="Meyers C."/>
            <person name="Nakajima M."/>
            <person name="Narusaka M."/>
            <person name="Seki M."/>
            <person name="Sakurai T."/>
            <person name="Satou M."/>
            <person name="Tamse R."/>
            <person name="Vaysberg M."/>
            <person name="Wallender E.K."/>
            <person name="Wong C."/>
            <person name="Yamamura Y."/>
            <person name="Yuan S."/>
            <person name="Shinozaki K."/>
            <person name="Davis R.W."/>
            <person name="Theologis A."/>
            <person name="Ecker J.R."/>
        </authorList>
    </citation>
    <scope>NUCLEOTIDE SEQUENCE [LARGE SCALE MRNA]</scope>
    <source>
        <strain>cv. Columbia</strain>
    </source>
</reference>
<reference key="5">
    <citation type="journal article" date="2002" name="Science">
        <title>Functional annotation of a full-length Arabidopsis cDNA collection.</title>
        <authorList>
            <person name="Seki M."/>
            <person name="Narusaka M."/>
            <person name="Kamiya A."/>
            <person name="Ishida J."/>
            <person name="Satou M."/>
            <person name="Sakurai T."/>
            <person name="Nakajima M."/>
            <person name="Enju A."/>
            <person name="Akiyama K."/>
            <person name="Oono Y."/>
            <person name="Muramatsu M."/>
            <person name="Hayashizaki Y."/>
            <person name="Kawai J."/>
            <person name="Carninci P."/>
            <person name="Itoh M."/>
            <person name="Ishii Y."/>
            <person name="Arakawa T."/>
            <person name="Shibata K."/>
            <person name="Shinagawa A."/>
            <person name="Shinozaki K."/>
        </authorList>
    </citation>
    <scope>NUCLEOTIDE SEQUENCE [LARGE SCALE MRNA]</scope>
    <source>
        <strain>cv. Columbia</strain>
    </source>
</reference>
<reference key="6">
    <citation type="journal article" date="2001" name="Trends Plant Sci.">
        <title>An unexpected plethora of trehalose biosynthesis genes in Arabidopsis thaliana.</title>
        <authorList>
            <person name="Leyman B."/>
            <person name="Van Dijck P."/>
            <person name="Thevelein J.M."/>
        </authorList>
    </citation>
    <scope>GENE FAMILY</scope>
    <scope>NOMENCLATURE</scope>
</reference>
<reference key="7">
    <citation type="journal article" date="2004" name="Plant Physiol.">
        <title>Trehalose mediated growth inhibition of Arabidopsis seedlings is due to trehalose-6-phosphate accumulation.</title>
        <authorList>
            <person name="Schluepmann H."/>
            <person name="van Dijken A.J.H."/>
            <person name="Aghdasi M."/>
            <person name="Wobbes B."/>
            <person name="Paul M."/>
            <person name="Smeekens S.C.M."/>
        </authorList>
    </citation>
    <scope>INDUCTION BY SUCROSE</scope>
</reference>
<reference key="8">
    <citation type="journal article" date="2004" name="Plant Physiol.">
        <title>Arabidopsis trehalose-6-phosphate synthase 1 is essential for normal vegetative growth and transition to flowering.</title>
        <authorList>
            <person name="van Dijken A.J.H."/>
            <person name="Schluepmann H."/>
            <person name="Smeekens S.C.M."/>
        </authorList>
    </citation>
    <scope>TISSUE SPECIFICITY</scope>
</reference>
<reference key="9">
    <citation type="journal article" date="2006" name="Plant J.">
        <title>Phosphorylation and 14-3-3 binding of Arabidopsis trehalose-phosphate synthase 5 in response to 2-deoxyglucose.</title>
        <authorList>
            <person name="Harthill J.E."/>
            <person name="Meek S.E.M."/>
            <person name="Morrice N."/>
            <person name="Peggie M.W."/>
            <person name="Borch J."/>
            <person name="Wong B.H.C."/>
            <person name="Mackintosh C."/>
        </authorList>
    </citation>
    <scope>PHOSPHORYLATION AT SER-5 AND THR-32</scope>
    <scope>MUTAGENESIS OF SER-5 AND THR-32</scope>
    <scope>INTERACTION WITH GRF/14-3-3</scope>
    <scope>IDENTIFICATION BY MASS SPECTROMETRY</scope>
</reference>
<reference key="10">
    <citation type="journal article" date="2008" name="J. Biol. Chem.">
        <title>The transcriptional co-activator MBF1c is a key regulator of thermotolerance in Arabidopsis thaliana.</title>
        <authorList>
            <person name="Suzuki N."/>
            <person name="Bajad S."/>
            <person name="Shuman J."/>
            <person name="Shulaev V."/>
            <person name="Mittler R."/>
        </authorList>
    </citation>
    <scope>INTERACTION WITH MBF1C</scope>
    <scope>INDUCTION BY HEAT</scope>
</reference>
<reference key="11">
    <citation type="journal article" date="2009" name="Plant Physiol.">
        <title>Large-scale Arabidopsis phosphoproteome profiling reveals novel chloroplast kinase substrates and phosphorylation networks.</title>
        <authorList>
            <person name="Reiland S."/>
            <person name="Messerli G."/>
            <person name="Baerenfaller K."/>
            <person name="Gerrits B."/>
            <person name="Endler A."/>
            <person name="Grossmann J."/>
            <person name="Gruissem W."/>
            <person name="Baginsky S."/>
        </authorList>
    </citation>
    <scope>IDENTIFICATION BY MASS SPECTROMETRY [LARGE SCALE ANALYSIS]</scope>
</reference>
<dbReference type="EC" id="2.4.1.15"/>
<dbReference type="EMBL" id="Z97344">
    <property type="protein sequence ID" value="CAB10557.1"/>
    <property type="status" value="ALT_SEQ"/>
    <property type="molecule type" value="Genomic_DNA"/>
</dbReference>
<dbReference type="EMBL" id="AL161547">
    <property type="protein sequence ID" value="CAB78780.1"/>
    <property type="status" value="ALT_SEQ"/>
    <property type="molecule type" value="Genomic_DNA"/>
</dbReference>
<dbReference type="EMBL" id="CP002687">
    <property type="protein sequence ID" value="AEE83948.1"/>
    <property type="molecule type" value="Genomic_DNA"/>
</dbReference>
<dbReference type="EMBL" id="CP002687">
    <property type="protein sequence ID" value="ANM68026.1"/>
    <property type="molecule type" value="Genomic_DNA"/>
</dbReference>
<dbReference type="EMBL" id="BT005967">
    <property type="protein sequence ID" value="AAO64902.1"/>
    <property type="molecule type" value="mRNA"/>
</dbReference>
<dbReference type="EMBL" id="AK118703">
    <property type="protein sequence ID" value="BAC43297.1"/>
    <property type="molecule type" value="mRNA"/>
</dbReference>
<dbReference type="PIR" id="H71447">
    <property type="entry name" value="H71447"/>
</dbReference>
<dbReference type="RefSeq" id="NP_001329809.1">
    <property type="nucleotide sequence ID" value="NM_001341241.1"/>
</dbReference>
<dbReference type="RefSeq" id="NP_567538.1">
    <property type="nucleotide sequence ID" value="NM_117886.3"/>
</dbReference>
<dbReference type="SMR" id="O23617"/>
<dbReference type="BioGRID" id="12791">
    <property type="interactions" value="2"/>
</dbReference>
<dbReference type="FunCoup" id="O23617">
    <property type="interactions" value="423"/>
</dbReference>
<dbReference type="IntAct" id="O23617">
    <property type="interactions" value="18"/>
</dbReference>
<dbReference type="STRING" id="3702.O23617"/>
<dbReference type="CAZy" id="GT20">
    <property type="family name" value="Glycosyltransferase Family 20"/>
</dbReference>
<dbReference type="iPTMnet" id="O23617"/>
<dbReference type="PaxDb" id="3702-AT4G17770.1"/>
<dbReference type="ProteomicsDB" id="232502"/>
<dbReference type="EnsemblPlants" id="AT4G17770.1">
    <property type="protein sequence ID" value="AT4G17770.1"/>
    <property type="gene ID" value="AT4G17770"/>
</dbReference>
<dbReference type="EnsemblPlants" id="AT4G17770.2">
    <property type="protein sequence ID" value="AT4G17770.2"/>
    <property type="gene ID" value="AT4G17770"/>
</dbReference>
<dbReference type="GeneID" id="827498"/>
<dbReference type="Gramene" id="AT4G17770.1">
    <property type="protein sequence ID" value="AT4G17770.1"/>
    <property type="gene ID" value="AT4G17770"/>
</dbReference>
<dbReference type="Gramene" id="AT4G17770.2">
    <property type="protein sequence ID" value="AT4G17770.2"/>
    <property type="gene ID" value="AT4G17770"/>
</dbReference>
<dbReference type="KEGG" id="ath:AT4G17770"/>
<dbReference type="Araport" id="AT4G17770"/>
<dbReference type="TAIR" id="AT4G17770">
    <property type="gene designation" value="TPS5"/>
</dbReference>
<dbReference type="eggNOG" id="KOG1050">
    <property type="taxonomic scope" value="Eukaryota"/>
</dbReference>
<dbReference type="HOGENOM" id="CLU_002351_3_1_1"/>
<dbReference type="InParanoid" id="O23617"/>
<dbReference type="OMA" id="MFYESAS"/>
<dbReference type="OrthoDB" id="755951at2759"/>
<dbReference type="PhylomeDB" id="O23617"/>
<dbReference type="BRENDA" id="2.4.1.15">
    <property type="organism ID" value="399"/>
</dbReference>
<dbReference type="CD-CODE" id="4299E36E">
    <property type="entry name" value="Nucleolus"/>
</dbReference>
<dbReference type="PRO" id="PR:O23617"/>
<dbReference type="Proteomes" id="UP000006548">
    <property type="component" value="Chromosome 4"/>
</dbReference>
<dbReference type="ExpressionAtlas" id="O23617">
    <property type="expression patterns" value="baseline and differential"/>
</dbReference>
<dbReference type="GO" id="GO:0016757">
    <property type="term" value="F:glycosyltransferase activity"/>
    <property type="evidence" value="ECO:0007669"/>
    <property type="project" value="UniProtKB-KW"/>
</dbReference>
<dbReference type="GO" id="GO:0005992">
    <property type="term" value="P:trehalose biosynthetic process"/>
    <property type="evidence" value="ECO:0007669"/>
    <property type="project" value="InterPro"/>
</dbReference>
<dbReference type="CDD" id="cd03788">
    <property type="entry name" value="GT20_TPS"/>
    <property type="match status" value="1"/>
</dbReference>
<dbReference type="CDD" id="cd01627">
    <property type="entry name" value="HAD_TPP"/>
    <property type="match status" value="1"/>
</dbReference>
<dbReference type="FunFam" id="3.40.50.2000:FF:000010">
    <property type="entry name" value="Alpha,alpha-trehalose-phosphate synthase"/>
    <property type="match status" value="1"/>
</dbReference>
<dbReference type="FunFam" id="3.40.50.1000:FF:000052">
    <property type="entry name" value="Alpha,alpha-trehalose-phosphate synthase [UDP-forming] 6"/>
    <property type="match status" value="1"/>
</dbReference>
<dbReference type="FunFam" id="3.40.50.1000:FF:000054">
    <property type="entry name" value="alpha,alpha-trehalose-phosphate synthase [UDP-forming] 6"/>
    <property type="match status" value="1"/>
</dbReference>
<dbReference type="FunFam" id="3.40.50.2000:FF:000017">
    <property type="entry name" value="alpha,alpha-trehalose-phosphate synthase [UDP-forming] 6"/>
    <property type="match status" value="1"/>
</dbReference>
<dbReference type="FunFam" id="3.30.70.1020:FF:000002">
    <property type="entry name" value="Trehalose-6-phosphate synthase 2"/>
    <property type="match status" value="1"/>
</dbReference>
<dbReference type="Gene3D" id="3.40.50.2000">
    <property type="entry name" value="Glycogen Phosphorylase B"/>
    <property type="match status" value="2"/>
</dbReference>
<dbReference type="Gene3D" id="3.40.50.1000">
    <property type="entry name" value="HAD superfamily/HAD-like"/>
    <property type="match status" value="1"/>
</dbReference>
<dbReference type="Gene3D" id="3.30.70.1020">
    <property type="entry name" value="Trehalose-6-phosphate phosphatase related protein, domain 2"/>
    <property type="match status" value="1"/>
</dbReference>
<dbReference type="InterPro" id="IPR001830">
    <property type="entry name" value="Glyco_trans_20"/>
</dbReference>
<dbReference type="InterPro" id="IPR036412">
    <property type="entry name" value="HAD-like_sf"/>
</dbReference>
<dbReference type="InterPro" id="IPR006379">
    <property type="entry name" value="HAD-SF_hydro_IIB"/>
</dbReference>
<dbReference type="InterPro" id="IPR023214">
    <property type="entry name" value="HAD_sf"/>
</dbReference>
<dbReference type="InterPro" id="IPR003337">
    <property type="entry name" value="Trehalose_PPase"/>
</dbReference>
<dbReference type="NCBIfam" id="TIGR01484">
    <property type="entry name" value="HAD-SF-IIB"/>
    <property type="match status" value="1"/>
</dbReference>
<dbReference type="NCBIfam" id="TIGR00685">
    <property type="entry name" value="T6PP"/>
    <property type="match status" value="1"/>
</dbReference>
<dbReference type="PANTHER" id="PTHR10788:SF94">
    <property type="entry name" value="ALPHA,ALPHA-TREHALOSE-PHOSPHATE SYNTHASE [UDP-FORMING] 5"/>
    <property type="match status" value="1"/>
</dbReference>
<dbReference type="PANTHER" id="PTHR10788">
    <property type="entry name" value="TREHALOSE-6-PHOSPHATE SYNTHASE"/>
    <property type="match status" value="1"/>
</dbReference>
<dbReference type="Pfam" id="PF00982">
    <property type="entry name" value="Glyco_transf_20"/>
    <property type="match status" value="1"/>
</dbReference>
<dbReference type="Pfam" id="PF02358">
    <property type="entry name" value="Trehalose_PPase"/>
    <property type="match status" value="1"/>
</dbReference>
<dbReference type="SUPFAM" id="SSF56784">
    <property type="entry name" value="HAD-like"/>
    <property type="match status" value="1"/>
</dbReference>
<dbReference type="SUPFAM" id="SSF53756">
    <property type="entry name" value="UDP-Glycosyltransferase/glycogen phosphorylase"/>
    <property type="match status" value="1"/>
</dbReference>
<gene>
    <name type="primary">TPS5</name>
    <name type="ordered locus">At4g17770</name>
    <name type="ORF">dl4920W</name>
    <name type="ORF">FCAALL.9</name>
</gene>
<proteinExistence type="evidence at protein level"/>
<accession>O23617</accession>
<accession>Q8GWQ1</accession>
<sequence length="862" mass="97454">MVSRSYSNLLDLASGNFHSFSREKKRFPRVATVTGVLSELDDDNNSNSVCSDAPSSVTQDRIIIVGNQLPIKSHRNSAGKLSFSWDNDSLLLQLKDGMREDMEVVYIGCLKEQIDTVEQDDVSQRLLENFKCVPAYIPPELFTKYYHGFCKQHLWPLFHYMLPLTPDLGGRFDRSLWQAYLSVNKIFADKVMEVISPDDDFVWVHDYHLMVLPTFLRKRFNRVKLGFFLHSPFPSSEIYRTLPVRNELLRALLNADLIGFHTFDYARHFLSCCSRMLGLSYQSKRGTIGLEYYGRTVSIKILPVGIHISQLQSILNLPETQTKVAELRDQFLDQKVLLGVDDMDIFKGISLKLLAMEQLLTQHPEKRGRVVLVQIANPARGRGKDVQEVQSETEATVKRINEMFGRPGYQPVVLIDTPLQFFERIAYYVIAECCLVTAVRDGMNLIPYEYIICRQGNPKLNETIGLDPSAAKKSMLVVSEFIGCSPSLSGAIRVNPWNIDAVTEAMDYALIVSEAEKQMRHEKHHKYVSTHDVAYWARSFIQDLERACGDHVRKRCWGIGFGLGFRVVALDPSFKKLSIEHIVSAYKRTKNRAILLDYDGTMVQPGSIRTTPTRETIEILNNLSSDPKNIVYLVSGKDRRTLTEWFSSCDDLGLGAEHGYFIRPNDGTDWETSSLVSGFEWKQIAEPVMRLYTETTDGSTIETKETALVWNYQFADPDFGSCQAKELMEHLESVLTNDPVSVKTGQQLVEVKPQGVNKGLVAERLLTTMQEKGKLLDFILCVGDDRSDEDMFEVIMSAKDGPALSPVAEIFACTVGQKPSKAKYYLDDTAEIIRMLDGLAATNTTISDQTDSTATVPTKDLF</sequence>
<name>TPS5_ARATH</name>
<evidence type="ECO:0000269" key="1">
    <source>
    </source>
</evidence>
<evidence type="ECO:0000269" key="2">
    <source>
    </source>
</evidence>
<evidence type="ECO:0000269" key="3">
    <source>
    </source>
</evidence>
<evidence type="ECO:0000269" key="4">
    <source>
    </source>
</evidence>
<evidence type="ECO:0000305" key="5"/>
<protein>
    <recommendedName>
        <fullName>Alpha,alpha-trehalose-phosphate synthase [UDP-forming] 5</fullName>
        <ecNumber>2.4.1.15</ecNumber>
    </recommendedName>
    <alternativeName>
        <fullName>Trehalose-6-phosphate synthase 5</fullName>
        <shortName>AtTPS5</shortName>
    </alternativeName>
</protein>
<organism>
    <name type="scientific">Arabidopsis thaliana</name>
    <name type="common">Mouse-ear cress</name>
    <dbReference type="NCBI Taxonomy" id="3702"/>
    <lineage>
        <taxon>Eukaryota</taxon>
        <taxon>Viridiplantae</taxon>
        <taxon>Streptophyta</taxon>
        <taxon>Embryophyta</taxon>
        <taxon>Tracheophyta</taxon>
        <taxon>Spermatophyta</taxon>
        <taxon>Magnoliopsida</taxon>
        <taxon>eudicotyledons</taxon>
        <taxon>Gunneridae</taxon>
        <taxon>Pentapetalae</taxon>
        <taxon>rosids</taxon>
        <taxon>malvids</taxon>
        <taxon>Brassicales</taxon>
        <taxon>Brassicaceae</taxon>
        <taxon>Camelineae</taxon>
        <taxon>Arabidopsis</taxon>
    </lineage>
</organism>
<feature type="chain" id="PRO_0000324826" description="Alpha,alpha-trehalose-phosphate synthase [UDP-forming] 5">
    <location>
        <begin position="1"/>
        <end position="862"/>
    </location>
</feature>
<feature type="region of interest" description="Glycosyltransferase">
    <location>
        <begin position="60"/>
        <end position="546"/>
    </location>
</feature>
<feature type="modified residue" description="Phosphoserine" evidence="3">
    <location>
        <position position="5"/>
    </location>
</feature>
<feature type="modified residue" description="Phosphothreonine" evidence="3">
    <location>
        <position position="32"/>
    </location>
</feature>
<feature type="mutagenesis site" description="Abolishes binding to GRF/14-3-3." evidence="3">
    <original>S</original>
    <variation>A</variation>
    <location>
        <position position="5"/>
    </location>
</feature>
<feature type="mutagenesis site" description="Abolishes binding to GRF/14-3-3." evidence="3">
    <original>T</original>
    <variation>A</variation>
    <location>
        <position position="32"/>
    </location>
</feature>
<comment type="catalytic activity">
    <reaction>
        <text>D-glucose 6-phosphate + UDP-alpha-D-glucose = alpha,alpha-trehalose 6-phosphate + UDP + H(+)</text>
        <dbReference type="Rhea" id="RHEA:18889"/>
        <dbReference type="ChEBI" id="CHEBI:15378"/>
        <dbReference type="ChEBI" id="CHEBI:58223"/>
        <dbReference type="ChEBI" id="CHEBI:58429"/>
        <dbReference type="ChEBI" id="CHEBI:58885"/>
        <dbReference type="ChEBI" id="CHEBI:61548"/>
        <dbReference type="EC" id="2.4.1.15"/>
    </reaction>
</comment>
<comment type="subunit">
    <text>Binds to the phosphopeptide-binding site of GRF/14-3-3 and to MBF1c.</text>
</comment>
<comment type="tissue specificity">
    <text evidence="1">Low expression in leaves, stems, flower buds, flowers and siliques.</text>
</comment>
<comment type="induction">
    <text evidence="2 4">90-fold induction by sucrose after 24 hours and by heat stress.</text>
</comment>
<comment type="PTM">
    <text evidence="3">Both Ser-5 and Thr-32 must be phosphorylated for binding to GRF/14-3-3.</text>
</comment>
<comment type="miscellaneous">
    <text>2-deoxyglucose, but not phenformin, enhances the phosphorylation of TPS5.</text>
</comment>
<comment type="similarity">
    <text evidence="5">In the N-terminal section; belongs to the glycosyltransferase 20 family.</text>
</comment>
<comment type="similarity">
    <text evidence="5">In the C-terminal section; belongs to the trehalose phosphatase family.</text>
</comment>
<comment type="sequence caution" evidence="5">
    <conflict type="erroneous gene model prediction">
        <sequence resource="EMBL-CDS" id="CAB10557"/>
    </conflict>
</comment>
<comment type="sequence caution" evidence="5">
    <conflict type="erroneous gene model prediction">
        <sequence resource="EMBL-CDS" id="CAB78780"/>
    </conflict>
</comment>